<reference key="1">
    <citation type="journal article" date="1989" name="Arch. Virol.">
        <title>Sequence of the coding regions from the 3.0 kb and 3.9 kb mRNA. Subgenomic species from a virulent isolate of transmissible gastroenteritis virus.</title>
        <authorList>
            <person name="Britton P."/>
            <person name="Lopez-Otin C."/>
            <person name="Martin-Alonso J.M."/>
            <person name="Parra F."/>
        </authorList>
    </citation>
    <scope>NUCLEOTIDE SEQUENCE [GENOMIC RNA]</scope>
</reference>
<evidence type="ECO:0000255" key="1">
    <source>
        <dbReference type="HAMAP-Rule" id="MF_04205"/>
    </source>
</evidence>
<proteinExistence type="inferred from homology"/>
<dbReference type="EMBL" id="X14551">
    <property type="protein sequence ID" value="CAA32688.1"/>
    <property type="molecule type" value="Genomic_RNA"/>
</dbReference>
<dbReference type="PIR" id="C60076">
    <property type="entry name" value="C60076"/>
</dbReference>
<dbReference type="GO" id="GO:0044178">
    <property type="term" value="C:host cell Golgi membrane"/>
    <property type="evidence" value="ECO:0007669"/>
    <property type="project" value="UniProtKB-SubCell"/>
</dbReference>
<dbReference type="GO" id="GO:0016020">
    <property type="term" value="C:membrane"/>
    <property type="evidence" value="ECO:0007669"/>
    <property type="project" value="UniProtKB-UniRule"/>
</dbReference>
<dbReference type="GO" id="GO:0140975">
    <property type="term" value="P:disruption of cellular anatomical structure in another organism"/>
    <property type="evidence" value="ECO:0007669"/>
    <property type="project" value="UniProtKB-UniRule"/>
</dbReference>
<dbReference type="GO" id="GO:0046760">
    <property type="term" value="P:viral budding from Golgi membrane"/>
    <property type="evidence" value="ECO:0007669"/>
    <property type="project" value="UniProtKB-UniRule"/>
</dbReference>
<dbReference type="HAMAP" id="MF_04205">
    <property type="entry name" value="ALPHA_CORONA_E"/>
    <property type="match status" value="1"/>
</dbReference>
<dbReference type="InterPro" id="IPR043507">
    <property type="entry name" value="E_protein_aCoV"/>
</dbReference>
<dbReference type="InterPro" id="IPR003873">
    <property type="entry name" value="E_protein_CoV"/>
</dbReference>
<dbReference type="Pfam" id="PF02723">
    <property type="entry name" value="CoV_E"/>
    <property type="match status" value="1"/>
</dbReference>
<dbReference type="PROSITE" id="PS51926">
    <property type="entry name" value="COV_E"/>
    <property type="match status" value="1"/>
</dbReference>
<gene>
    <name evidence="1" type="primary">E</name>
    <name type="synonym">sM</name>
    <name type="ORF">4</name>
</gene>
<organism>
    <name type="scientific">Porcine transmissible gastroenteritis coronavirus (strain FS772/70)</name>
    <name type="common">TGEV</name>
    <dbReference type="NCBI Taxonomy" id="11150"/>
    <lineage>
        <taxon>Viruses</taxon>
        <taxon>Riboviria</taxon>
        <taxon>Orthornavirae</taxon>
        <taxon>Pisuviricota</taxon>
        <taxon>Pisoniviricetes</taxon>
        <taxon>Nidovirales</taxon>
        <taxon>Cornidovirineae</taxon>
        <taxon>Coronaviridae</taxon>
        <taxon>Orthocoronavirinae</taxon>
        <taxon>Alphacoronavirus</taxon>
        <taxon>Tegacovirus</taxon>
        <taxon>Alphacoronavirus 1</taxon>
    </lineage>
</organism>
<protein>
    <recommendedName>
        <fullName evidence="1">Envelope small membrane protein</fullName>
        <shortName evidence="1">E protein</shortName>
        <shortName evidence="1">sM protein</shortName>
    </recommendedName>
</protein>
<accession>P22655</accession>
<keyword id="KW-0053">Apoptosis</keyword>
<keyword id="KW-1040">Host Golgi apparatus</keyword>
<keyword id="KW-1043">Host membrane</keyword>
<keyword id="KW-0472">Membrane</keyword>
<keyword id="KW-0812">Transmembrane</keyword>
<keyword id="KW-1133">Transmembrane helix</keyword>
<feature type="chain" id="PRO_0000106091" description="Envelope small membrane protein">
    <location>
        <begin position="1"/>
        <end position="81"/>
    </location>
</feature>
<feature type="topological domain" description="Virion surface" evidence="1">
    <location>
        <begin position="1"/>
        <end position="19"/>
    </location>
</feature>
<feature type="transmembrane region" description="Helical" evidence="1">
    <location>
        <begin position="20"/>
        <end position="40"/>
    </location>
</feature>
<feature type="topological domain" description="Intravirion" evidence="1">
    <location>
        <begin position="41"/>
        <end position="81"/>
    </location>
</feature>
<name>VEMP_CVPFS</name>
<sequence>MTFPRALTVIDDNGLVISIIFWFLLIIILILFSIALLNIIKLCMVCCNLGRTVIVPVQHAYDAYKNFMRIKAYNHDGALLV</sequence>
<comment type="function">
    <text evidence="1">Plays a central role in virus morphogenesis and assembly. Acts as a viroporin and self-assembles in host membranes forming pentameric protein-lipid pores that allow ion transport. Also plays a role in the induction of apoptosis.</text>
</comment>
<comment type="subunit">
    <text evidence="1">Homopentamer. Interacts with membrane protein M in the budding compartment of the host cell, which is located between endoplasmic reticulum and the Golgi complex. Interacts with Nucleoprotein.</text>
</comment>
<comment type="subcellular location">
    <subcellularLocation>
        <location evidence="1">Host Golgi apparatus membrane</location>
        <topology evidence="1">Single-pass type III membrane protein</topology>
    </subcellularLocation>
    <text evidence="1">The cytoplasmic tail functions as a Golgi complex-targeting signal.</text>
</comment>
<comment type="similarity">
    <text evidence="1">Belongs to the alphacoronaviruses E protein family.</text>
</comment>
<organismHost>
    <name type="scientific">Sus scrofa</name>
    <name type="common">Pig</name>
    <dbReference type="NCBI Taxonomy" id="9823"/>
</organismHost>